<dbReference type="EC" id="3.1.1.3"/>
<dbReference type="PIR" id="PX0065">
    <property type="entry name" value="PX0065"/>
</dbReference>
<dbReference type="ESTHER" id="burce-lipad">
    <property type="family name" value="Bacterial_lip_FamI.2"/>
</dbReference>
<dbReference type="GO" id="GO:0004806">
    <property type="term" value="F:triacylglycerol lipase activity"/>
    <property type="evidence" value="ECO:0007669"/>
    <property type="project" value="UniProtKB-EC"/>
</dbReference>
<dbReference type="GO" id="GO:0016042">
    <property type="term" value="P:lipid catabolic process"/>
    <property type="evidence" value="ECO:0007669"/>
    <property type="project" value="UniProtKB-KW"/>
</dbReference>
<dbReference type="Gene3D" id="3.40.50.1820">
    <property type="entry name" value="alpha/beta hydrolase"/>
    <property type="match status" value="1"/>
</dbReference>
<dbReference type="InterPro" id="IPR029058">
    <property type="entry name" value="AB_hydrolase_fold"/>
</dbReference>
<evidence type="ECO:0000305" key="1"/>
<organism>
    <name type="scientific">Burkholderia cepacia</name>
    <name type="common">Pseudomonas cepacia</name>
    <dbReference type="NCBI Taxonomy" id="292"/>
    <lineage>
        <taxon>Bacteria</taxon>
        <taxon>Pseudomonadati</taxon>
        <taxon>Pseudomonadota</taxon>
        <taxon>Betaproteobacteria</taxon>
        <taxon>Burkholderiales</taxon>
        <taxon>Burkholderiaceae</taxon>
        <taxon>Burkholderia</taxon>
        <taxon>Burkholderia cepacia complex</taxon>
    </lineage>
</organism>
<proteinExistence type="evidence at protein level"/>
<reference key="1">
    <citation type="journal article" date="1992" name="J. Biochem.">
        <title>Purification and characterization of a novel thermostable lipase from Pseudomonas cepacia.</title>
        <authorList>
            <person name="Sugihara A."/>
            <person name="Ueshima M."/>
            <person name="Shimada Y."/>
            <person name="Tsunasawa S."/>
            <person name="Tominaga Y."/>
        </authorList>
    </citation>
    <scope>PROTEIN SEQUENCE</scope>
</reference>
<comment type="function">
    <text>This thermostable and solvent-tolerant lipase is rather nonspecific. It can synthesize both primary and secondary alcohol esters. Simple triglycerides of short and middle chain fatty acids (C&lt;13) are the preferred substrates.</text>
</comment>
<comment type="catalytic activity">
    <reaction>
        <text>a triacylglycerol + H2O = a diacylglycerol + a fatty acid + H(+)</text>
        <dbReference type="Rhea" id="RHEA:12044"/>
        <dbReference type="ChEBI" id="CHEBI:15377"/>
        <dbReference type="ChEBI" id="CHEBI:15378"/>
        <dbReference type="ChEBI" id="CHEBI:17855"/>
        <dbReference type="ChEBI" id="CHEBI:18035"/>
        <dbReference type="ChEBI" id="CHEBI:28868"/>
        <dbReference type="EC" id="3.1.1.3"/>
    </reaction>
</comment>
<comment type="biophysicochemical properties">
    <temperatureDependence>
        <text>Thermostable.</text>
    </temperatureDependence>
</comment>
<comment type="similarity">
    <text evidence="1">Belongs to the AB hydrolase superfamily. Pseudomonas lipase family.</text>
</comment>
<protein>
    <recommendedName>
        <fullName>Lipase, thermostable</fullName>
        <ecNumber>3.1.1.3</ecNumber>
    </recommendedName>
    <alternativeName>
        <fullName>Triacylglycerol lipase</fullName>
    </alternativeName>
</protein>
<feature type="chain" id="PRO_0000090354" description="Lipase, thermostable">
    <location>
        <begin position="1"/>
        <end position="56" status="greater than"/>
    </location>
</feature>
<feature type="non-terminal residue">
    <location>
        <position position="56"/>
    </location>
</feature>
<keyword id="KW-0903">Direct protein sequencing</keyword>
<keyword id="KW-0378">Hydrolase</keyword>
<keyword id="KW-0442">Lipid degradation</keyword>
<keyword id="KW-0443">Lipid metabolism</keyword>
<sequence>AVDDYAATRYPIILVHGLTTDSKYGGVVEYXYRNPNDLTSHXXAAYVYELRSDPLD</sequence>
<accession>P29605</accession>
<name>LIPT_BURCE</name>